<organism>
    <name type="scientific">Clostridium botulinum (strain Langeland / NCTC 10281 / Type F)</name>
    <dbReference type="NCBI Taxonomy" id="441772"/>
    <lineage>
        <taxon>Bacteria</taxon>
        <taxon>Bacillati</taxon>
        <taxon>Bacillota</taxon>
        <taxon>Clostridia</taxon>
        <taxon>Eubacteriales</taxon>
        <taxon>Clostridiaceae</taxon>
        <taxon>Clostridium</taxon>
    </lineage>
</organism>
<accession>A7GD74</accession>
<evidence type="ECO:0000255" key="1">
    <source>
        <dbReference type="HAMAP-Rule" id="MF_00674"/>
    </source>
</evidence>
<sequence>MPRPTKFRRVEFFPENNYFVPWGKPKCEIHEVVLKVEELEAMRLKDIEELNQEQCAEKMEISRQTFQNIIDSARKKVAIALTEGKAIKISGGHYTTKLCKLKCIDCEEIYEINYEQDRHLCPNCGSEKVICNKKADFCRRWCKGQNRKEQYEESKNK</sequence>
<comment type="similarity">
    <text evidence="1">Belongs to the UPF0251 family.</text>
</comment>
<gene>
    <name type="ordered locus">CLI_1469</name>
</gene>
<proteinExistence type="inferred from homology"/>
<protein>
    <recommendedName>
        <fullName evidence="1">UPF0251 protein CLI_1469</fullName>
    </recommendedName>
</protein>
<dbReference type="EMBL" id="CP000728">
    <property type="protein sequence ID" value="ABS39968.1"/>
    <property type="molecule type" value="Genomic_DNA"/>
</dbReference>
<dbReference type="RefSeq" id="WP_003358683.1">
    <property type="nucleotide sequence ID" value="NC_009699.1"/>
</dbReference>
<dbReference type="KEGG" id="cbf:CLI_1469"/>
<dbReference type="HOGENOM" id="CLU_094511_0_1_9"/>
<dbReference type="Proteomes" id="UP000002410">
    <property type="component" value="Chromosome"/>
</dbReference>
<dbReference type="HAMAP" id="MF_00674">
    <property type="entry name" value="UPF0251"/>
    <property type="match status" value="1"/>
</dbReference>
<dbReference type="InterPro" id="IPR013324">
    <property type="entry name" value="RNA_pol_sigma_r3/r4-like"/>
</dbReference>
<dbReference type="InterPro" id="IPR002852">
    <property type="entry name" value="UPF0251"/>
</dbReference>
<dbReference type="PANTHER" id="PTHR37478">
    <property type="match status" value="1"/>
</dbReference>
<dbReference type="PANTHER" id="PTHR37478:SF2">
    <property type="entry name" value="UPF0251 PROTEIN TK0562"/>
    <property type="match status" value="1"/>
</dbReference>
<dbReference type="Pfam" id="PF02001">
    <property type="entry name" value="DUF134"/>
    <property type="match status" value="1"/>
</dbReference>
<dbReference type="SUPFAM" id="SSF88659">
    <property type="entry name" value="Sigma3 and sigma4 domains of RNA polymerase sigma factors"/>
    <property type="match status" value="1"/>
</dbReference>
<name>Y1469_CLOBL</name>
<feature type="chain" id="PRO_1000044744" description="UPF0251 protein CLI_1469">
    <location>
        <begin position="1"/>
        <end position="157"/>
    </location>
</feature>
<reference key="1">
    <citation type="submission" date="2007-06" db="EMBL/GenBank/DDBJ databases">
        <authorList>
            <person name="Brinkac L.M."/>
            <person name="Daugherty S."/>
            <person name="Dodson R.J."/>
            <person name="Madupu R."/>
            <person name="Brown J.L."/>
            <person name="Bruce D."/>
            <person name="Detter C."/>
            <person name="Munk C."/>
            <person name="Smith L.A."/>
            <person name="Smith T.J."/>
            <person name="White O."/>
            <person name="Brettin T.S."/>
        </authorList>
    </citation>
    <scope>NUCLEOTIDE SEQUENCE [LARGE SCALE GENOMIC DNA]</scope>
    <source>
        <strain>Langeland / NCTC 10281 / Type F</strain>
    </source>
</reference>